<protein>
    <recommendedName>
        <fullName evidence="1">Na(+)/H(+) antiporter NhaA</fullName>
    </recommendedName>
    <alternativeName>
        <fullName evidence="1">Sodium/proton antiporter NhaA</fullName>
    </alternativeName>
</protein>
<proteinExistence type="inferred from homology"/>
<comment type="function">
    <text evidence="1">Na(+)/H(+) antiporter that extrudes sodium in exchange for external protons.</text>
</comment>
<comment type="catalytic activity">
    <reaction evidence="1">
        <text>Na(+)(in) + 2 H(+)(out) = Na(+)(out) + 2 H(+)(in)</text>
        <dbReference type="Rhea" id="RHEA:29251"/>
        <dbReference type="ChEBI" id="CHEBI:15378"/>
        <dbReference type="ChEBI" id="CHEBI:29101"/>
    </reaction>
    <physiologicalReaction direction="left-to-right" evidence="1">
        <dbReference type="Rhea" id="RHEA:29252"/>
    </physiologicalReaction>
</comment>
<comment type="subcellular location">
    <subcellularLocation>
        <location evidence="1">Cell inner membrane</location>
        <topology evidence="1">Multi-pass membrane protein</topology>
    </subcellularLocation>
</comment>
<comment type="similarity">
    <text evidence="1">Belongs to the NhaA Na(+)/H(+) (TC 2.A.33) antiporter family.</text>
</comment>
<dbReference type="EMBL" id="CP000449">
    <property type="protein sequence ID" value="ABI66628.1"/>
    <property type="molecule type" value="Genomic_DNA"/>
</dbReference>
<dbReference type="RefSeq" id="WP_011644273.1">
    <property type="nucleotide sequence ID" value="NC_008347.1"/>
</dbReference>
<dbReference type="SMR" id="Q0AM65"/>
<dbReference type="STRING" id="394221.Mmar10_2336"/>
<dbReference type="KEGG" id="mmr:Mmar10_2336"/>
<dbReference type="eggNOG" id="COG3004">
    <property type="taxonomic scope" value="Bacteria"/>
</dbReference>
<dbReference type="HOGENOM" id="CLU_015803_1_0_5"/>
<dbReference type="OrthoDB" id="9808135at2"/>
<dbReference type="Proteomes" id="UP000001964">
    <property type="component" value="Chromosome"/>
</dbReference>
<dbReference type="GO" id="GO:0005886">
    <property type="term" value="C:plasma membrane"/>
    <property type="evidence" value="ECO:0007669"/>
    <property type="project" value="UniProtKB-SubCell"/>
</dbReference>
<dbReference type="GO" id="GO:0015385">
    <property type="term" value="F:sodium:proton antiporter activity"/>
    <property type="evidence" value="ECO:0007669"/>
    <property type="project" value="TreeGrafter"/>
</dbReference>
<dbReference type="GO" id="GO:0006885">
    <property type="term" value="P:regulation of pH"/>
    <property type="evidence" value="ECO:0007669"/>
    <property type="project" value="InterPro"/>
</dbReference>
<dbReference type="Gene3D" id="1.20.1530.10">
    <property type="entry name" value="Na+/H+ antiporter like domain"/>
    <property type="match status" value="1"/>
</dbReference>
<dbReference type="HAMAP" id="MF_01844">
    <property type="entry name" value="NhaA"/>
    <property type="match status" value="1"/>
</dbReference>
<dbReference type="InterPro" id="IPR023171">
    <property type="entry name" value="Na/H_antiporter_dom_sf"/>
</dbReference>
<dbReference type="InterPro" id="IPR004670">
    <property type="entry name" value="NhaA"/>
</dbReference>
<dbReference type="NCBIfam" id="TIGR00773">
    <property type="entry name" value="NhaA"/>
    <property type="match status" value="1"/>
</dbReference>
<dbReference type="NCBIfam" id="NF007111">
    <property type="entry name" value="PRK09560.1"/>
    <property type="match status" value="1"/>
</dbReference>
<dbReference type="NCBIfam" id="NF007112">
    <property type="entry name" value="PRK09561.1"/>
    <property type="match status" value="1"/>
</dbReference>
<dbReference type="PANTHER" id="PTHR30341:SF0">
    <property type="entry name" value="NA(+)_H(+) ANTIPORTER NHAA"/>
    <property type="match status" value="1"/>
</dbReference>
<dbReference type="PANTHER" id="PTHR30341">
    <property type="entry name" value="SODIUM ION/PROTON ANTIPORTER NHAA-RELATED"/>
    <property type="match status" value="1"/>
</dbReference>
<dbReference type="Pfam" id="PF06965">
    <property type="entry name" value="Na_H_antiport_1"/>
    <property type="match status" value="1"/>
</dbReference>
<feature type="chain" id="PRO_0000334336" description="Na(+)/H(+) antiporter NhaA">
    <location>
        <begin position="1"/>
        <end position="403"/>
    </location>
</feature>
<feature type="transmembrane region" description="Helical" evidence="1">
    <location>
        <begin position="25"/>
        <end position="45"/>
    </location>
</feature>
<feature type="transmembrane region" description="Helical" evidence="1">
    <location>
        <begin position="70"/>
        <end position="90"/>
    </location>
</feature>
<feature type="transmembrane region" description="Helical" evidence="1">
    <location>
        <begin position="105"/>
        <end position="125"/>
    </location>
</feature>
<feature type="transmembrane region" description="Helical" evidence="1">
    <location>
        <begin position="136"/>
        <end position="156"/>
    </location>
</feature>
<feature type="transmembrane region" description="Helical" evidence="1">
    <location>
        <begin position="165"/>
        <end position="185"/>
    </location>
</feature>
<feature type="transmembrane region" description="Helical" evidence="1">
    <location>
        <begin position="188"/>
        <end position="208"/>
    </location>
</feature>
<feature type="transmembrane region" description="Helical" evidence="1">
    <location>
        <begin position="213"/>
        <end position="233"/>
    </location>
</feature>
<feature type="transmembrane region" description="Helical" evidence="1">
    <location>
        <begin position="234"/>
        <end position="254"/>
    </location>
</feature>
<feature type="transmembrane region" description="Helical" evidence="1">
    <location>
        <begin position="269"/>
        <end position="289"/>
    </location>
</feature>
<feature type="transmembrane region" description="Helical" evidence="1">
    <location>
        <begin position="302"/>
        <end position="322"/>
    </location>
</feature>
<feature type="transmembrane region" description="Helical" evidence="1">
    <location>
        <begin position="340"/>
        <end position="360"/>
    </location>
</feature>
<feature type="transmembrane region" description="Helical" evidence="1">
    <location>
        <begin position="369"/>
        <end position="389"/>
    </location>
</feature>
<reference key="1">
    <citation type="submission" date="2006-08" db="EMBL/GenBank/DDBJ databases">
        <title>Complete sequence of Maricaulis maris MCS10.</title>
        <authorList>
            <consortium name="US DOE Joint Genome Institute"/>
            <person name="Copeland A."/>
            <person name="Lucas S."/>
            <person name="Lapidus A."/>
            <person name="Barry K."/>
            <person name="Detter J.C."/>
            <person name="Glavina del Rio T."/>
            <person name="Hammon N."/>
            <person name="Israni S."/>
            <person name="Dalin E."/>
            <person name="Tice H."/>
            <person name="Pitluck S."/>
            <person name="Saunders E."/>
            <person name="Brettin T."/>
            <person name="Bruce D."/>
            <person name="Han C."/>
            <person name="Tapia R."/>
            <person name="Gilna P."/>
            <person name="Schmutz J."/>
            <person name="Larimer F."/>
            <person name="Land M."/>
            <person name="Hauser L."/>
            <person name="Kyrpides N."/>
            <person name="Mikhailova N."/>
            <person name="Viollier P."/>
            <person name="Stephens C."/>
            <person name="Richardson P."/>
        </authorList>
    </citation>
    <scope>NUCLEOTIDE SEQUENCE [LARGE SCALE GENOMIC DNA]</scope>
    <source>
        <strain>MCS10</strain>
    </source>
</reference>
<accession>Q0AM65</accession>
<gene>
    <name evidence="1" type="primary">nhaA</name>
    <name type="ordered locus">Mmar10_2336</name>
</gene>
<sequence length="403" mass="42457">MTKNSTECSPANQTGLERVLRSPAIAGLVLLVSMLVAFFWVNSPFADSYEAIHHAPAAISIGSFELAKPLILWINEGLMIVFFFLIGLEIKREVFEGQLSSPKQIALPAFAALGGMLVPAAIFLAFNNGSEEYVRGWAVPAATDIVLALALLAMLGSRVPIALKVFLTALAIFDDFGTLVIIALAYSEGLSLPSLLMAALGTLALIVLNRLRVASLTAYVLVGVFVWVSVLESGVHSTLAGVIIAWCIPMRVSGREFLHKIEHDLSPWVALLIVPLFAFFNAGIDLGGVDFETFFGPLGLGIILGLFVGKQVGVMLGVGLAVVLRIGARPIEVSWGHLYGAALLSGVGFTMSLFVAGLAFEQPGAVLTVNLAVVVGSVLSATGGLVVLARSYQTSPSLANAPD</sequence>
<organism>
    <name type="scientific">Maricaulis maris (strain MCS10)</name>
    <name type="common">Caulobacter maris</name>
    <dbReference type="NCBI Taxonomy" id="394221"/>
    <lineage>
        <taxon>Bacteria</taxon>
        <taxon>Pseudomonadati</taxon>
        <taxon>Pseudomonadota</taxon>
        <taxon>Alphaproteobacteria</taxon>
        <taxon>Maricaulales</taxon>
        <taxon>Maricaulaceae</taxon>
        <taxon>Maricaulis</taxon>
    </lineage>
</organism>
<name>NHAA_MARMM</name>
<keyword id="KW-0050">Antiport</keyword>
<keyword id="KW-0997">Cell inner membrane</keyword>
<keyword id="KW-1003">Cell membrane</keyword>
<keyword id="KW-0406">Ion transport</keyword>
<keyword id="KW-0472">Membrane</keyword>
<keyword id="KW-1185">Reference proteome</keyword>
<keyword id="KW-0915">Sodium</keyword>
<keyword id="KW-0739">Sodium transport</keyword>
<keyword id="KW-0812">Transmembrane</keyword>
<keyword id="KW-1133">Transmembrane helix</keyword>
<keyword id="KW-0813">Transport</keyword>
<evidence type="ECO:0000255" key="1">
    <source>
        <dbReference type="HAMAP-Rule" id="MF_01844"/>
    </source>
</evidence>